<name>MENC_SALCH</name>
<evidence type="ECO:0000255" key="1">
    <source>
        <dbReference type="HAMAP-Rule" id="MF_00470"/>
    </source>
</evidence>
<reference key="1">
    <citation type="journal article" date="2005" name="Nucleic Acids Res.">
        <title>The genome sequence of Salmonella enterica serovar Choleraesuis, a highly invasive and resistant zoonotic pathogen.</title>
        <authorList>
            <person name="Chiu C.-H."/>
            <person name="Tang P."/>
            <person name="Chu C."/>
            <person name="Hu S."/>
            <person name="Bao Q."/>
            <person name="Yu J."/>
            <person name="Chou Y.-Y."/>
            <person name="Wang H.-S."/>
            <person name="Lee Y.-S."/>
        </authorList>
    </citation>
    <scope>NUCLEOTIDE SEQUENCE [LARGE SCALE GENOMIC DNA]</scope>
    <source>
        <strain>SC-B67</strain>
    </source>
</reference>
<dbReference type="EC" id="4.2.1.113" evidence="1"/>
<dbReference type="EMBL" id="AE017220">
    <property type="protein sequence ID" value="AAX66212.1"/>
    <property type="molecule type" value="Genomic_DNA"/>
</dbReference>
<dbReference type="RefSeq" id="WP_001255561.1">
    <property type="nucleotide sequence ID" value="NC_006905.1"/>
</dbReference>
<dbReference type="SMR" id="Q57M50"/>
<dbReference type="KEGG" id="sec:SCH_2306"/>
<dbReference type="HOGENOM" id="CLU_030273_0_1_6"/>
<dbReference type="UniPathway" id="UPA00079"/>
<dbReference type="UniPathway" id="UPA01057">
    <property type="reaction ID" value="UER00165"/>
</dbReference>
<dbReference type="Proteomes" id="UP000000538">
    <property type="component" value="Chromosome"/>
</dbReference>
<dbReference type="GO" id="GO:0000287">
    <property type="term" value="F:magnesium ion binding"/>
    <property type="evidence" value="ECO:0007669"/>
    <property type="project" value="UniProtKB-UniRule"/>
</dbReference>
<dbReference type="GO" id="GO:0043748">
    <property type="term" value="F:O-succinylbenzoate synthase activity"/>
    <property type="evidence" value="ECO:0007669"/>
    <property type="project" value="UniProtKB-EC"/>
</dbReference>
<dbReference type="GO" id="GO:0009234">
    <property type="term" value="P:menaquinone biosynthetic process"/>
    <property type="evidence" value="ECO:0007669"/>
    <property type="project" value="UniProtKB-UniRule"/>
</dbReference>
<dbReference type="CDD" id="cd03320">
    <property type="entry name" value="OSBS"/>
    <property type="match status" value="1"/>
</dbReference>
<dbReference type="FunFam" id="3.20.20.120:FF:000006">
    <property type="entry name" value="o-succinylbenzoate synthase"/>
    <property type="match status" value="1"/>
</dbReference>
<dbReference type="Gene3D" id="3.20.20.120">
    <property type="entry name" value="Enolase-like C-terminal domain"/>
    <property type="match status" value="1"/>
</dbReference>
<dbReference type="Gene3D" id="3.30.390.10">
    <property type="entry name" value="Enolase-like, N-terminal domain"/>
    <property type="match status" value="1"/>
</dbReference>
<dbReference type="HAMAP" id="MF_00470">
    <property type="entry name" value="MenC_1"/>
    <property type="match status" value="1"/>
</dbReference>
<dbReference type="InterPro" id="IPR036849">
    <property type="entry name" value="Enolase-like_C_sf"/>
</dbReference>
<dbReference type="InterPro" id="IPR029017">
    <property type="entry name" value="Enolase-like_N"/>
</dbReference>
<dbReference type="InterPro" id="IPR029065">
    <property type="entry name" value="Enolase_C-like"/>
</dbReference>
<dbReference type="InterPro" id="IPR013342">
    <property type="entry name" value="Mandelate_racemase_C"/>
</dbReference>
<dbReference type="InterPro" id="IPR010196">
    <property type="entry name" value="OSB_synthase_MenC1"/>
</dbReference>
<dbReference type="InterPro" id="IPR041338">
    <property type="entry name" value="OSBS_N"/>
</dbReference>
<dbReference type="NCBIfam" id="TIGR01927">
    <property type="entry name" value="menC_gam_Gplu"/>
    <property type="match status" value="1"/>
</dbReference>
<dbReference type="NCBIfam" id="NF003473">
    <property type="entry name" value="PRK05105.1"/>
    <property type="match status" value="1"/>
</dbReference>
<dbReference type="PANTHER" id="PTHR48073:SF2">
    <property type="entry name" value="O-SUCCINYLBENZOATE SYNTHASE"/>
    <property type="match status" value="1"/>
</dbReference>
<dbReference type="PANTHER" id="PTHR48073">
    <property type="entry name" value="O-SUCCINYLBENZOATE SYNTHASE-RELATED"/>
    <property type="match status" value="1"/>
</dbReference>
<dbReference type="Pfam" id="PF21508">
    <property type="entry name" value="MenC_N"/>
    <property type="match status" value="1"/>
</dbReference>
<dbReference type="Pfam" id="PF13378">
    <property type="entry name" value="MR_MLE_C"/>
    <property type="match status" value="1"/>
</dbReference>
<dbReference type="SFLD" id="SFLDS00001">
    <property type="entry name" value="Enolase"/>
    <property type="match status" value="1"/>
</dbReference>
<dbReference type="SFLD" id="SFLDF00009">
    <property type="entry name" value="o-succinylbenzoate_synthase"/>
    <property type="match status" value="1"/>
</dbReference>
<dbReference type="SMART" id="SM00922">
    <property type="entry name" value="MR_MLE"/>
    <property type="match status" value="1"/>
</dbReference>
<dbReference type="SUPFAM" id="SSF51604">
    <property type="entry name" value="Enolase C-terminal domain-like"/>
    <property type="match status" value="1"/>
</dbReference>
<dbReference type="SUPFAM" id="SSF54826">
    <property type="entry name" value="Enolase N-terminal domain-like"/>
    <property type="match status" value="1"/>
</dbReference>
<protein>
    <recommendedName>
        <fullName evidence="1">o-succinylbenzoate synthase</fullName>
        <shortName evidence="1">OSB synthase</shortName>
        <shortName evidence="1">OSBS</shortName>
        <ecNumber evidence="1">4.2.1.113</ecNumber>
    </recommendedName>
    <alternativeName>
        <fullName evidence="1">4-(2'-carboxyphenyl)-4-oxybutyric acid synthase</fullName>
    </alternativeName>
    <alternativeName>
        <fullName evidence="1">o-succinylbenzoic acid synthase</fullName>
    </alternativeName>
</protein>
<organism>
    <name type="scientific">Salmonella choleraesuis (strain SC-B67)</name>
    <dbReference type="NCBI Taxonomy" id="321314"/>
    <lineage>
        <taxon>Bacteria</taxon>
        <taxon>Pseudomonadati</taxon>
        <taxon>Pseudomonadota</taxon>
        <taxon>Gammaproteobacteria</taxon>
        <taxon>Enterobacterales</taxon>
        <taxon>Enterobacteriaceae</taxon>
        <taxon>Salmonella</taxon>
    </lineage>
</organism>
<feature type="chain" id="PRO_1000013809" description="o-succinylbenzoate synthase">
    <location>
        <begin position="1"/>
        <end position="320"/>
    </location>
</feature>
<feature type="active site" description="Proton donor" evidence="1">
    <location>
        <position position="133"/>
    </location>
</feature>
<feature type="active site" description="Proton acceptor" evidence="1">
    <location>
        <position position="235"/>
    </location>
</feature>
<feature type="binding site" evidence="1">
    <location>
        <position position="161"/>
    </location>
    <ligand>
        <name>Mg(2+)</name>
        <dbReference type="ChEBI" id="CHEBI:18420"/>
    </ligand>
</feature>
<feature type="binding site" evidence="1">
    <location>
        <position position="190"/>
    </location>
    <ligand>
        <name>Mg(2+)</name>
        <dbReference type="ChEBI" id="CHEBI:18420"/>
    </ligand>
</feature>
<feature type="binding site" evidence="1">
    <location>
        <position position="213"/>
    </location>
    <ligand>
        <name>Mg(2+)</name>
        <dbReference type="ChEBI" id="CHEBI:18420"/>
    </ligand>
</feature>
<comment type="function">
    <text evidence="1">Converts 2-succinyl-6-hydroxy-2,4-cyclohexadiene-1-carboxylate (SHCHC) to 2-succinylbenzoate (OSB).</text>
</comment>
<comment type="catalytic activity">
    <reaction evidence="1">
        <text>(1R,6R)-6-hydroxy-2-succinyl-cyclohexa-2,4-diene-1-carboxylate = 2-succinylbenzoate + H2O</text>
        <dbReference type="Rhea" id="RHEA:10196"/>
        <dbReference type="ChEBI" id="CHEBI:15377"/>
        <dbReference type="ChEBI" id="CHEBI:18325"/>
        <dbReference type="ChEBI" id="CHEBI:58689"/>
        <dbReference type="EC" id="4.2.1.113"/>
    </reaction>
</comment>
<comment type="cofactor">
    <cofactor evidence="1">
        <name>a divalent metal cation</name>
        <dbReference type="ChEBI" id="CHEBI:60240"/>
    </cofactor>
</comment>
<comment type="pathway">
    <text evidence="1">Quinol/quinone metabolism; 1,4-dihydroxy-2-naphthoate biosynthesis; 1,4-dihydroxy-2-naphthoate from chorismate: step 4/7.</text>
</comment>
<comment type="pathway">
    <text evidence="1">Quinol/quinone metabolism; menaquinone biosynthesis.</text>
</comment>
<comment type="similarity">
    <text evidence="1">Belongs to the mandelate racemase/muconate lactonizing enzyme family. MenC type 1 subfamily.</text>
</comment>
<accession>Q57M50</accession>
<gene>
    <name evidence="1" type="primary">menC</name>
    <name type="ordered locus">SCH_2306</name>
</gene>
<sequence>MRSAQVYRWQIPMDAGVVLRDRRLKTRDGLYVCLRDGEREGWGEISPLPGFSQETWEEAQTALLTWVNDWLQGSEGLPEMPSVAFGASCALAELTGVLPEAADYRAAPLCTGDPDDLVLRLADMPGEKIAKVKVGLYEAVRDGMVVNLLLEAIPDLHLRLDANRAWTPLKAQQFAKYVNPDYRARIAFLEEPCKTRDDSRAFARETGIAIAWDESLREADFTFEAEEGVRAVVIKPTLTGSLDKVREQVAAAHALGLTAVISSSIESSLGLTQLARIAAWLTPGTLPGLDTLHLMQAQQIRPWPGSALPCLKREELERLL</sequence>
<proteinExistence type="inferred from homology"/>
<keyword id="KW-0456">Lyase</keyword>
<keyword id="KW-0460">Magnesium</keyword>
<keyword id="KW-0474">Menaquinone biosynthesis</keyword>
<keyword id="KW-0479">Metal-binding</keyword>